<protein>
    <recommendedName>
        <fullName>Uncharacterized transporter YojE</fullName>
    </recommendedName>
</protein>
<gene>
    <name type="primary">yojE</name>
    <name type="synonym">yojD</name>
    <name type="ordered locus">BSU19480</name>
</gene>
<sequence length="298" mass="33383">MQHAETKKGVIYTAVSFIMWGLFPLYWKLLEQLPALDILAHRIIWSFVFMCIVLFFLRQWKIGWQELRSLKKNGGILSLFLASILISINWFVYIWAVNHGFLLEASLGYYINPLVSVLLGILFLKEKLNRLQLVAVSIAAAGVIISAFQYGSIPYVALLLAFSFGLYGLSKKRTSLPSAIGLTLETFMIMPIALGYLLFSGHVQPAGAESGGTWLLLFLAGVFTALPLLLFAEGAKRLPLYQVGILQYIAPTITLLIGLFVYHEPFSSSKAFTFSCIWAALLLFTFSQVKWKRASKSH</sequence>
<feature type="chain" id="PRO_0000360073" description="Uncharacterized transporter YojE">
    <location>
        <begin position="1"/>
        <end position="298"/>
    </location>
</feature>
<feature type="transmembrane region" description="Helical" evidence="1">
    <location>
        <begin position="10"/>
        <end position="30"/>
    </location>
</feature>
<feature type="transmembrane region" description="Helical" evidence="1">
    <location>
        <begin position="36"/>
        <end position="56"/>
    </location>
</feature>
<feature type="transmembrane region" description="Helical" evidence="1">
    <location>
        <begin position="76"/>
        <end position="96"/>
    </location>
</feature>
<feature type="transmembrane region" description="Helical" evidence="1">
    <location>
        <begin position="101"/>
        <end position="121"/>
    </location>
</feature>
<feature type="transmembrane region" description="Helical" evidence="1">
    <location>
        <begin position="142"/>
        <end position="162"/>
    </location>
</feature>
<feature type="transmembrane region" description="Helical" evidence="1">
    <location>
        <begin position="179"/>
        <end position="199"/>
    </location>
</feature>
<feature type="transmembrane region" description="Helical" evidence="1">
    <location>
        <begin position="212"/>
        <end position="232"/>
    </location>
</feature>
<feature type="transmembrane region" description="Helical" evidence="1">
    <location>
        <begin position="243"/>
        <end position="263"/>
    </location>
</feature>
<feature type="transmembrane region" description="Helical" evidence="1">
    <location>
        <begin position="271"/>
        <end position="291"/>
    </location>
</feature>
<feature type="domain" description="EamA 1">
    <location>
        <begin position="17"/>
        <end position="148"/>
    </location>
</feature>
<feature type="domain" description="EamA 2">
    <location>
        <begin position="162"/>
        <end position="286"/>
    </location>
</feature>
<name>YOJE_BACSU</name>
<accession>O31859</accession>
<accession>Q7BV99</accession>
<dbReference type="EMBL" id="AF026147">
    <property type="protein sequence ID" value="AAC17852.1"/>
    <property type="status" value="ALT_FRAME"/>
    <property type="molecule type" value="Genomic_DNA"/>
</dbReference>
<dbReference type="EMBL" id="AL009126">
    <property type="protein sequence ID" value="CAB13840.2"/>
    <property type="molecule type" value="Genomic_DNA"/>
</dbReference>
<dbReference type="PIR" id="B69906">
    <property type="entry name" value="B69906"/>
</dbReference>
<dbReference type="RefSeq" id="NP_389830.2">
    <property type="nucleotide sequence ID" value="NC_000964.3"/>
</dbReference>
<dbReference type="SMR" id="O31859"/>
<dbReference type="FunCoup" id="O31859">
    <property type="interactions" value="100"/>
</dbReference>
<dbReference type="STRING" id="224308.BSU19480"/>
<dbReference type="PaxDb" id="224308-BSU19480"/>
<dbReference type="EnsemblBacteria" id="CAB13840">
    <property type="protein sequence ID" value="CAB13840"/>
    <property type="gene ID" value="BSU_19480"/>
</dbReference>
<dbReference type="GeneID" id="939447"/>
<dbReference type="KEGG" id="bsu:BSU19480"/>
<dbReference type="PATRIC" id="fig|224308.179.peg.2131"/>
<dbReference type="eggNOG" id="COG2962">
    <property type="taxonomic scope" value="Bacteria"/>
</dbReference>
<dbReference type="InParanoid" id="O31859"/>
<dbReference type="OrthoDB" id="369870at2"/>
<dbReference type="PhylomeDB" id="O31859"/>
<dbReference type="BioCyc" id="BSUB:BSU19480-MONOMER"/>
<dbReference type="Proteomes" id="UP000001570">
    <property type="component" value="Chromosome"/>
</dbReference>
<dbReference type="GO" id="GO:0005886">
    <property type="term" value="C:plasma membrane"/>
    <property type="evidence" value="ECO:0000318"/>
    <property type="project" value="GO_Central"/>
</dbReference>
<dbReference type="InterPro" id="IPR000620">
    <property type="entry name" value="EamA_dom"/>
</dbReference>
<dbReference type="InterPro" id="IPR004626">
    <property type="entry name" value="RarD"/>
</dbReference>
<dbReference type="NCBIfam" id="TIGR00688">
    <property type="entry name" value="rarD"/>
    <property type="match status" value="1"/>
</dbReference>
<dbReference type="PANTHER" id="PTHR22911">
    <property type="entry name" value="ACYL-MALONYL CONDENSING ENZYME-RELATED"/>
    <property type="match status" value="1"/>
</dbReference>
<dbReference type="PANTHER" id="PTHR22911:SF137">
    <property type="entry name" value="SOLUTE CARRIER FAMILY 35 MEMBER G2-RELATED"/>
    <property type="match status" value="1"/>
</dbReference>
<dbReference type="Pfam" id="PF00892">
    <property type="entry name" value="EamA"/>
    <property type="match status" value="2"/>
</dbReference>
<dbReference type="SUPFAM" id="SSF103481">
    <property type="entry name" value="Multidrug resistance efflux transporter EmrE"/>
    <property type="match status" value="2"/>
</dbReference>
<proteinExistence type="inferred from homology"/>
<evidence type="ECO:0000255" key="1"/>
<evidence type="ECO:0000305" key="2"/>
<keyword id="KW-1003">Cell membrane</keyword>
<keyword id="KW-0472">Membrane</keyword>
<keyword id="KW-1185">Reference proteome</keyword>
<keyword id="KW-0677">Repeat</keyword>
<keyword id="KW-0812">Transmembrane</keyword>
<keyword id="KW-1133">Transmembrane helix</keyword>
<keyword id="KW-0813">Transport</keyword>
<organism>
    <name type="scientific">Bacillus subtilis (strain 168)</name>
    <dbReference type="NCBI Taxonomy" id="224308"/>
    <lineage>
        <taxon>Bacteria</taxon>
        <taxon>Bacillati</taxon>
        <taxon>Bacillota</taxon>
        <taxon>Bacilli</taxon>
        <taxon>Bacillales</taxon>
        <taxon>Bacillaceae</taxon>
        <taxon>Bacillus</taxon>
    </lineage>
</organism>
<comment type="subcellular location">
    <subcellularLocation>
        <location evidence="2">Cell membrane</location>
        <topology evidence="2">Multi-pass membrane protein</topology>
    </subcellularLocation>
</comment>
<comment type="similarity">
    <text evidence="2">Belongs to the EamA transporter family.</text>
</comment>
<comment type="sequence caution" evidence="2">
    <conflict type="frameshift">
        <sequence resource="EMBL-CDS" id="AAC17852"/>
    </conflict>
</comment>
<reference key="1">
    <citation type="journal article" date="1998" name="DNA Res.">
        <title>Sequence analysis of the Bacillus subtilis 168 chromosome region between the sspC and odhA loci (184 degrees-180 degrees).</title>
        <authorList>
            <person name="Ghim S.-Y."/>
            <person name="Choi S.-K."/>
            <person name="Shin B.-S."/>
            <person name="Jeong Y.-M."/>
            <person name="Sorokin A."/>
            <person name="Ehrlich S.D."/>
            <person name="Park S.-H."/>
        </authorList>
    </citation>
    <scope>NUCLEOTIDE SEQUENCE [GENOMIC DNA]</scope>
    <source>
        <strain>168</strain>
    </source>
</reference>
<reference key="2">
    <citation type="journal article" date="1997" name="Nature">
        <title>The complete genome sequence of the Gram-positive bacterium Bacillus subtilis.</title>
        <authorList>
            <person name="Kunst F."/>
            <person name="Ogasawara N."/>
            <person name="Moszer I."/>
            <person name="Albertini A.M."/>
            <person name="Alloni G."/>
            <person name="Azevedo V."/>
            <person name="Bertero M.G."/>
            <person name="Bessieres P."/>
            <person name="Bolotin A."/>
            <person name="Borchert S."/>
            <person name="Borriss R."/>
            <person name="Boursier L."/>
            <person name="Brans A."/>
            <person name="Braun M."/>
            <person name="Brignell S.C."/>
            <person name="Bron S."/>
            <person name="Brouillet S."/>
            <person name="Bruschi C.V."/>
            <person name="Caldwell B."/>
            <person name="Capuano V."/>
            <person name="Carter N.M."/>
            <person name="Choi S.-K."/>
            <person name="Codani J.-J."/>
            <person name="Connerton I.F."/>
            <person name="Cummings N.J."/>
            <person name="Daniel R.A."/>
            <person name="Denizot F."/>
            <person name="Devine K.M."/>
            <person name="Duesterhoeft A."/>
            <person name="Ehrlich S.D."/>
            <person name="Emmerson P.T."/>
            <person name="Entian K.-D."/>
            <person name="Errington J."/>
            <person name="Fabret C."/>
            <person name="Ferrari E."/>
            <person name="Foulger D."/>
            <person name="Fritz C."/>
            <person name="Fujita M."/>
            <person name="Fujita Y."/>
            <person name="Fuma S."/>
            <person name="Galizzi A."/>
            <person name="Galleron N."/>
            <person name="Ghim S.-Y."/>
            <person name="Glaser P."/>
            <person name="Goffeau A."/>
            <person name="Golightly E.J."/>
            <person name="Grandi G."/>
            <person name="Guiseppi G."/>
            <person name="Guy B.J."/>
            <person name="Haga K."/>
            <person name="Haiech J."/>
            <person name="Harwood C.R."/>
            <person name="Henaut A."/>
            <person name="Hilbert H."/>
            <person name="Holsappel S."/>
            <person name="Hosono S."/>
            <person name="Hullo M.-F."/>
            <person name="Itaya M."/>
            <person name="Jones L.-M."/>
            <person name="Joris B."/>
            <person name="Karamata D."/>
            <person name="Kasahara Y."/>
            <person name="Klaerr-Blanchard M."/>
            <person name="Klein C."/>
            <person name="Kobayashi Y."/>
            <person name="Koetter P."/>
            <person name="Koningstein G."/>
            <person name="Krogh S."/>
            <person name="Kumano M."/>
            <person name="Kurita K."/>
            <person name="Lapidus A."/>
            <person name="Lardinois S."/>
            <person name="Lauber J."/>
            <person name="Lazarevic V."/>
            <person name="Lee S.-M."/>
            <person name="Levine A."/>
            <person name="Liu H."/>
            <person name="Masuda S."/>
            <person name="Mauel C."/>
            <person name="Medigue C."/>
            <person name="Medina N."/>
            <person name="Mellado R.P."/>
            <person name="Mizuno M."/>
            <person name="Moestl D."/>
            <person name="Nakai S."/>
            <person name="Noback M."/>
            <person name="Noone D."/>
            <person name="O'Reilly M."/>
            <person name="Ogawa K."/>
            <person name="Ogiwara A."/>
            <person name="Oudega B."/>
            <person name="Park S.-H."/>
            <person name="Parro V."/>
            <person name="Pohl T.M."/>
            <person name="Portetelle D."/>
            <person name="Porwollik S."/>
            <person name="Prescott A.M."/>
            <person name="Presecan E."/>
            <person name="Pujic P."/>
            <person name="Purnelle B."/>
            <person name="Rapoport G."/>
            <person name="Rey M."/>
            <person name="Reynolds S."/>
            <person name="Rieger M."/>
            <person name="Rivolta C."/>
            <person name="Rocha E."/>
            <person name="Roche B."/>
            <person name="Rose M."/>
            <person name="Sadaie Y."/>
            <person name="Sato T."/>
            <person name="Scanlan E."/>
            <person name="Schleich S."/>
            <person name="Schroeter R."/>
            <person name="Scoffone F."/>
            <person name="Sekiguchi J."/>
            <person name="Sekowska A."/>
            <person name="Seror S.J."/>
            <person name="Serror P."/>
            <person name="Shin B.-S."/>
            <person name="Soldo B."/>
            <person name="Sorokin A."/>
            <person name="Tacconi E."/>
            <person name="Takagi T."/>
            <person name="Takahashi H."/>
            <person name="Takemaru K."/>
            <person name="Takeuchi M."/>
            <person name="Tamakoshi A."/>
            <person name="Tanaka T."/>
            <person name="Terpstra P."/>
            <person name="Tognoni A."/>
            <person name="Tosato V."/>
            <person name="Uchiyama S."/>
            <person name="Vandenbol M."/>
            <person name="Vannier F."/>
            <person name="Vassarotti A."/>
            <person name="Viari A."/>
            <person name="Wambutt R."/>
            <person name="Wedler E."/>
            <person name="Wedler H."/>
            <person name="Weitzenegger T."/>
            <person name="Winters P."/>
            <person name="Wipat A."/>
            <person name="Yamamoto H."/>
            <person name="Yamane K."/>
            <person name="Yasumoto K."/>
            <person name="Yata K."/>
            <person name="Yoshida K."/>
            <person name="Yoshikawa H.-F."/>
            <person name="Zumstein E."/>
            <person name="Yoshikawa H."/>
            <person name="Danchin A."/>
        </authorList>
    </citation>
    <scope>NUCLEOTIDE SEQUENCE [LARGE SCALE GENOMIC DNA]</scope>
    <source>
        <strain>168</strain>
    </source>
</reference>